<keyword id="KW-0119">Carbohydrate metabolism</keyword>
<keyword id="KW-0963">Cytoplasm</keyword>
<keyword id="KW-0294">Fucose metabolism</keyword>
<keyword id="KW-0413">Isomerase</keyword>
<keyword id="KW-1185">Reference proteome</keyword>
<organism>
    <name type="scientific">Citrobacter koseri (strain ATCC BAA-895 / CDC 4225-83 / SGSC4696)</name>
    <dbReference type="NCBI Taxonomy" id="290338"/>
    <lineage>
        <taxon>Bacteria</taxon>
        <taxon>Pseudomonadati</taxon>
        <taxon>Pseudomonadota</taxon>
        <taxon>Gammaproteobacteria</taxon>
        <taxon>Enterobacterales</taxon>
        <taxon>Enterobacteriaceae</taxon>
        <taxon>Citrobacter</taxon>
    </lineage>
</organism>
<accession>A8AP17</accession>
<evidence type="ECO:0000255" key="1">
    <source>
        <dbReference type="HAMAP-Rule" id="MF_01662"/>
    </source>
</evidence>
<sequence length="140" mass="15384">MLKTISPLISPELLKVLAEMGHGDEIIFSDAHFPAHSMGPQVIRADGLKVSDLLRAIIPLFELDSYAPPLVMMAAVEGDSLDPTVEARYRDALSLQTPCPEIVRIDRYAFYERAQKAFAIVITGECAKYGNILLKKGVTP</sequence>
<comment type="function">
    <text evidence="1">Involved in the anomeric conversion of L-fucose.</text>
</comment>
<comment type="catalytic activity">
    <reaction evidence="1">
        <text>alpha-L-fucose = beta-L-fucose</text>
        <dbReference type="Rhea" id="RHEA:25580"/>
        <dbReference type="ChEBI" id="CHEBI:42548"/>
        <dbReference type="ChEBI" id="CHEBI:42589"/>
        <dbReference type="EC" id="5.1.3.29"/>
    </reaction>
</comment>
<comment type="pathway">
    <text evidence="1">Carbohydrate metabolism; L-fucose metabolism.</text>
</comment>
<comment type="subunit">
    <text evidence="1">Homodecamer.</text>
</comment>
<comment type="subcellular location">
    <subcellularLocation>
        <location evidence="1">Cytoplasm</location>
    </subcellularLocation>
</comment>
<comment type="similarity">
    <text evidence="1">Belongs to the RbsD / FucU family. FucU mutarotase subfamily.</text>
</comment>
<reference key="1">
    <citation type="submission" date="2007-08" db="EMBL/GenBank/DDBJ databases">
        <authorList>
            <consortium name="The Citrobacter koseri Genome Sequencing Project"/>
            <person name="McClelland M."/>
            <person name="Sanderson E.K."/>
            <person name="Porwollik S."/>
            <person name="Spieth J."/>
            <person name="Clifton W.S."/>
            <person name="Latreille P."/>
            <person name="Courtney L."/>
            <person name="Wang C."/>
            <person name="Pepin K."/>
            <person name="Bhonagiri V."/>
            <person name="Nash W."/>
            <person name="Johnson M."/>
            <person name="Thiruvilangam P."/>
            <person name="Wilson R."/>
        </authorList>
    </citation>
    <scope>NUCLEOTIDE SEQUENCE [LARGE SCALE GENOMIC DNA]</scope>
    <source>
        <strain>ATCC BAA-895 / CDC 4225-83 / SGSC4696</strain>
    </source>
</reference>
<protein>
    <recommendedName>
        <fullName evidence="1">L-fucose mutarotase</fullName>
        <ecNumber evidence="1">5.1.3.29</ecNumber>
    </recommendedName>
    <alternativeName>
        <fullName evidence="1">Fucose 1-epimerase</fullName>
    </alternativeName>
    <alternativeName>
        <fullName evidence="1">Type-2 mutarotase</fullName>
    </alternativeName>
</protein>
<feature type="chain" id="PRO_0000344537" description="L-fucose mutarotase">
    <location>
        <begin position="1"/>
        <end position="140"/>
    </location>
</feature>
<feature type="active site" description="Proton donor" evidence="1">
    <location>
        <position position="22"/>
    </location>
</feature>
<feature type="binding site" evidence="1">
    <location>
        <position position="30"/>
    </location>
    <ligand>
        <name>substrate</name>
    </ligand>
</feature>
<feature type="binding site" evidence="1">
    <location>
        <position position="107"/>
    </location>
    <ligand>
        <name>substrate</name>
    </ligand>
</feature>
<feature type="binding site" evidence="1">
    <location>
        <begin position="129"/>
        <end position="131"/>
    </location>
    <ligand>
        <name>substrate</name>
    </ligand>
</feature>
<proteinExistence type="inferred from homology"/>
<gene>
    <name evidence="1" type="primary">fucU</name>
    <name type="ordered locus">CKO_04165</name>
</gene>
<dbReference type="EC" id="5.1.3.29" evidence="1"/>
<dbReference type="EMBL" id="CP000822">
    <property type="protein sequence ID" value="ABV15230.1"/>
    <property type="molecule type" value="Genomic_DNA"/>
</dbReference>
<dbReference type="RefSeq" id="WP_012134919.1">
    <property type="nucleotide sequence ID" value="NC_009792.1"/>
</dbReference>
<dbReference type="SMR" id="A8AP17"/>
<dbReference type="STRING" id="290338.CKO_04165"/>
<dbReference type="GeneID" id="45137791"/>
<dbReference type="KEGG" id="cko:CKO_04165"/>
<dbReference type="HOGENOM" id="CLU_120075_1_0_6"/>
<dbReference type="OrthoDB" id="7947972at2"/>
<dbReference type="UniPathway" id="UPA00956"/>
<dbReference type="Proteomes" id="UP000008148">
    <property type="component" value="Chromosome"/>
</dbReference>
<dbReference type="GO" id="GO:0005737">
    <property type="term" value="C:cytoplasm"/>
    <property type="evidence" value="ECO:0007669"/>
    <property type="project" value="UniProtKB-SubCell"/>
</dbReference>
<dbReference type="GO" id="GO:0042806">
    <property type="term" value="F:fucose binding"/>
    <property type="evidence" value="ECO:0007669"/>
    <property type="project" value="InterPro"/>
</dbReference>
<dbReference type="GO" id="GO:0036373">
    <property type="term" value="F:L-fucose mutarotase activity"/>
    <property type="evidence" value="ECO:0007669"/>
    <property type="project" value="UniProtKB-EC"/>
</dbReference>
<dbReference type="GO" id="GO:0036065">
    <property type="term" value="P:fucosylation"/>
    <property type="evidence" value="ECO:0007669"/>
    <property type="project" value="TreeGrafter"/>
</dbReference>
<dbReference type="GO" id="GO:0042354">
    <property type="term" value="P:L-fucose metabolic process"/>
    <property type="evidence" value="ECO:0007669"/>
    <property type="project" value="UniProtKB-UniRule"/>
</dbReference>
<dbReference type="FunFam" id="3.40.1650.10:FF:000001">
    <property type="entry name" value="L-fucose mutarotase"/>
    <property type="match status" value="1"/>
</dbReference>
<dbReference type="Gene3D" id="3.40.1650.10">
    <property type="entry name" value="RbsD-like domain"/>
    <property type="match status" value="1"/>
</dbReference>
<dbReference type="HAMAP" id="MF_01662">
    <property type="entry name" value="L_fucose_rotase"/>
    <property type="match status" value="1"/>
</dbReference>
<dbReference type="InterPro" id="IPR023751">
    <property type="entry name" value="L-fucose_mutarotase"/>
</dbReference>
<dbReference type="InterPro" id="IPR023750">
    <property type="entry name" value="RbsD-like_sf"/>
</dbReference>
<dbReference type="InterPro" id="IPR050443">
    <property type="entry name" value="RbsD/FucU_mutarotase"/>
</dbReference>
<dbReference type="InterPro" id="IPR007721">
    <property type="entry name" value="RbsD_FucU"/>
</dbReference>
<dbReference type="NCBIfam" id="NF011949">
    <property type="entry name" value="PRK15420.1"/>
    <property type="match status" value="1"/>
</dbReference>
<dbReference type="PANTHER" id="PTHR31690">
    <property type="entry name" value="FUCOSE MUTAROTASE"/>
    <property type="match status" value="1"/>
</dbReference>
<dbReference type="PANTHER" id="PTHR31690:SF4">
    <property type="entry name" value="FUCOSE MUTAROTASE"/>
    <property type="match status" value="1"/>
</dbReference>
<dbReference type="Pfam" id="PF05025">
    <property type="entry name" value="RbsD_FucU"/>
    <property type="match status" value="1"/>
</dbReference>
<dbReference type="SUPFAM" id="SSF102546">
    <property type="entry name" value="RbsD-like"/>
    <property type="match status" value="1"/>
</dbReference>
<name>FUCM_CITK8</name>